<accession>Q9VSY6</accession>
<accession>Q9U4B0</accession>
<reference key="1">
    <citation type="journal article" date="2000" name="Genetics">
        <title>Mutations affecting the development of the peripheral nervous system in Drosophila: a molecular screen for novel proteins.</title>
        <authorList>
            <person name="Prokopenko S.N."/>
            <person name="He Y."/>
            <person name="Lu Y."/>
            <person name="Bellen H.J."/>
        </authorList>
    </citation>
    <scope>NUCLEOTIDE SEQUENCE [MRNA]</scope>
    <scope>DEVELOPMENTAL STAGE</scope>
</reference>
<reference key="2">
    <citation type="journal article" date="2000" name="Science">
        <title>The genome sequence of Drosophila melanogaster.</title>
        <authorList>
            <person name="Adams M.D."/>
            <person name="Celniker S.E."/>
            <person name="Holt R.A."/>
            <person name="Evans C.A."/>
            <person name="Gocayne J.D."/>
            <person name="Amanatides P.G."/>
            <person name="Scherer S.E."/>
            <person name="Li P.W."/>
            <person name="Hoskins R.A."/>
            <person name="Galle R.F."/>
            <person name="George R.A."/>
            <person name="Lewis S.E."/>
            <person name="Richards S."/>
            <person name="Ashburner M."/>
            <person name="Henderson S.N."/>
            <person name="Sutton G.G."/>
            <person name="Wortman J.R."/>
            <person name="Yandell M.D."/>
            <person name="Zhang Q."/>
            <person name="Chen L.X."/>
            <person name="Brandon R.C."/>
            <person name="Rogers Y.-H.C."/>
            <person name="Blazej R.G."/>
            <person name="Champe M."/>
            <person name="Pfeiffer B.D."/>
            <person name="Wan K.H."/>
            <person name="Doyle C."/>
            <person name="Baxter E.G."/>
            <person name="Helt G."/>
            <person name="Nelson C.R."/>
            <person name="Miklos G.L.G."/>
            <person name="Abril J.F."/>
            <person name="Agbayani A."/>
            <person name="An H.-J."/>
            <person name="Andrews-Pfannkoch C."/>
            <person name="Baldwin D."/>
            <person name="Ballew R.M."/>
            <person name="Basu A."/>
            <person name="Baxendale J."/>
            <person name="Bayraktaroglu L."/>
            <person name="Beasley E.M."/>
            <person name="Beeson K.Y."/>
            <person name="Benos P.V."/>
            <person name="Berman B.P."/>
            <person name="Bhandari D."/>
            <person name="Bolshakov S."/>
            <person name="Borkova D."/>
            <person name="Botchan M.R."/>
            <person name="Bouck J."/>
            <person name="Brokstein P."/>
            <person name="Brottier P."/>
            <person name="Burtis K.C."/>
            <person name="Busam D.A."/>
            <person name="Butler H."/>
            <person name="Cadieu E."/>
            <person name="Center A."/>
            <person name="Chandra I."/>
            <person name="Cherry J.M."/>
            <person name="Cawley S."/>
            <person name="Dahlke C."/>
            <person name="Davenport L.B."/>
            <person name="Davies P."/>
            <person name="de Pablos B."/>
            <person name="Delcher A."/>
            <person name="Deng Z."/>
            <person name="Mays A.D."/>
            <person name="Dew I."/>
            <person name="Dietz S.M."/>
            <person name="Dodson K."/>
            <person name="Doup L.E."/>
            <person name="Downes M."/>
            <person name="Dugan-Rocha S."/>
            <person name="Dunkov B.C."/>
            <person name="Dunn P."/>
            <person name="Durbin K.J."/>
            <person name="Evangelista C.C."/>
            <person name="Ferraz C."/>
            <person name="Ferriera S."/>
            <person name="Fleischmann W."/>
            <person name="Fosler C."/>
            <person name="Gabrielian A.E."/>
            <person name="Garg N.S."/>
            <person name="Gelbart W.M."/>
            <person name="Glasser K."/>
            <person name="Glodek A."/>
            <person name="Gong F."/>
            <person name="Gorrell J.H."/>
            <person name="Gu Z."/>
            <person name="Guan P."/>
            <person name="Harris M."/>
            <person name="Harris N.L."/>
            <person name="Harvey D.A."/>
            <person name="Heiman T.J."/>
            <person name="Hernandez J.R."/>
            <person name="Houck J."/>
            <person name="Hostin D."/>
            <person name="Houston K.A."/>
            <person name="Howland T.J."/>
            <person name="Wei M.-H."/>
            <person name="Ibegwam C."/>
            <person name="Jalali M."/>
            <person name="Kalush F."/>
            <person name="Karpen G.H."/>
            <person name="Ke Z."/>
            <person name="Kennison J.A."/>
            <person name="Ketchum K.A."/>
            <person name="Kimmel B.E."/>
            <person name="Kodira C.D."/>
            <person name="Kraft C.L."/>
            <person name="Kravitz S."/>
            <person name="Kulp D."/>
            <person name="Lai Z."/>
            <person name="Lasko P."/>
            <person name="Lei Y."/>
            <person name="Levitsky A.A."/>
            <person name="Li J.H."/>
            <person name="Li Z."/>
            <person name="Liang Y."/>
            <person name="Lin X."/>
            <person name="Liu X."/>
            <person name="Mattei B."/>
            <person name="McIntosh T.C."/>
            <person name="McLeod M.P."/>
            <person name="McPherson D."/>
            <person name="Merkulov G."/>
            <person name="Milshina N.V."/>
            <person name="Mobarry C."/>
            <person name="Morris J."/>
            <person name="Moshrefi A."/>
            <person name="Mount S.M."/>
            <person name="Moy M."/>
            <person name="Murphy B."/>
            <person name="Murphy L."/>
            <person name="Muzny D.M."/>
            <person name="Nelson D.L."/>
            <person name="Nelson D.R."/>
            <person name="Nelson K.A."/>
            <person name="Nixon K."/>
            <person name="Nusskern D.R."/>
            <person name="Pacleb J.M."/>
            <person name="Palazzolo M."/>
            <person name="Pittman G.S."/>
            <person name="Pan S."/>
            <person name="Pollard J."/>
            <person name="Puri V."/>
            <person name="Reese M.G."/>
            <person name="Reinert K."/>
            <person name="Remington K."/>
            <person name="Saunders R.D.C."/>
            <person name="Scheeler F."/>
            <person name="Shen H."/>
            <person name="Shue B.C."/>
            <person name="Siden-Kiamos I."/>
            <person name="Simpson M."/>
            <person name="Skupski M.P."/>
            <person name="Smith T.J."/>
            <person name="Spier E."/>
            <person name="Spradling A.C."/>
            <person name="Stapleton M."/>
            <person name="Strong R."/>
            <person name="Sun E."/>
            <person name="Svirskas R."/>
            <person name="Tector C."/>
            <person name="Turner R."/>
            <person name="Venter E."/>
            <person name="Wang A.H."/>
            <person name="Wang X."/>
            <person name="Wang Z.-Y."/>
            <person name="Wassarman D.A."/>
            <person name="Weinstock G.M."/>
            <person name="Weissenbach J."/>
            <person name="Williams S.M."/>
            <person name="Woodage T."/>
            <person name="Worley K.C."/>
            <person name="Wu D."/>
            <person name="Yang S."/>
            <person name="Yao Q.A."/>
            <person name="Ye J."/>
            <person name="Yeh R.-F."/>
            <person name="Zaveri J.S."/>
            <person name="Zhan M."/>
            <person name="Zhang G."/>
            <person name="Zhao Q."/>
            <person name="Zheng L."/>
            <person name="Zheng X.H."/>
            <person name="Zhong F.N."/>
            <person name="Zhong W."/>
            <person name="Zhou X."/>
            <person name="Zhu S.C."/>
            <person name="Zhu X."/>
            <person name="Smith H.O."/>
            <person name="Gibbs R.A."/>
            <person name="Myers E.W."/>
            <person name="Rubin G.M."/>
            <person name="Venter J.C."/>
        </authorList>
    </citation>
    <scope>NUCLEOTIDE SEQUENCE [LARGE SCALE GENOMIC DNA]</scope>
    <source>
        <strain>Berkeley</strain>
    </source>
</reference>
<reference key="3">
    <citation type="journal article" date="2002" name="Genome Biol.">
        <title>Annotation of the Drosophila melanogaster euchromatic genome: a systematic review.</title>
        <authorList>
            <person name="Misra S."/>
            <person name="Crosby M.A."/>
            <person name="Mungall C.J."/>
            <person name="Matthews B.B."/>
            <person name="Campbell K.S."/>
            <person name="Hradecky P."/>
            <person name="Huang Y."/>
            <person name="Kaminker J.S."/>
            <person name="Millburn G.H."/>
            <person name="Prochnik S.E."/>
            <person name="Smith C.D."/>
            <person name="Tupy J.L."/>
            <person name="Whitfield E.J."/>
            <person name="Bayraktaroglu L."/>
            <person name="Berman B.P."/>
            <person name="Bettencourt B.R."/>
            <person name="Celniker S.E."/>
            <person name="de Grey A.D.N.J."/>
            <person name="Drysdale R.A."/>
            <person name="Harris N.L."/>
            <person name="Richter J."/>
            <person name="Russo S."/>
            <person name="Schroeder A.J."/>
            <person name="Shu S.Q."/>
            <person name="Stapleton M."/>
            <person name="Yamada C."/>
            <person name="Ashburner M."/>
            <person name="Gelbart W.M."/>
            <person name="Rubin G.M."/>
            <person name="Lewis S.E."/>
        </authorList>
    </citation>
    <scope>GENOME REANNOTATION</scope>
    <source>
        <strain>Berkeley</strain>
    </source>
</reference>
<reference key="4">
    <citation type="journal article" date="2002" name="Genome Biol.">
        <title>A Drosophila full-length cDNA resource.</title>
        <authorList>
            <person name="Stapleton M."/>
            <person name="Carlson J.W."/>
            <person name="Brokstein P."/>
            <person name="Yu C."/>
            <person name="Champe M."/>
            <person name="George R.A."/>
            <person name="Guarin H."/>
            <person name="Kronmiller B."/>
            <person name="Pacleb J.M."/>
            <person name="Park S."/>
            <person name="Wan K.H."/>
            <person name="Rubin G.M."/>
            <person name="Celniker S.E."/>
        </authorList>
    </citation>
    <scope>NUCLEOTIDE SEQUENCE [LARGE SCALE MRNA]</scope>
    <source>
        <strain>Berkeley</strain>
        <tissue>Embryo</tissue>
    </source>
</reference>
<dbReference type="EC" id="3.1.3.3"/>
<dbReference type="EMBL" id="AF191498">
    <property type="protein sequence ID" value="AAF14696.1"/>
    <property type="molecule type" value="mRNA"/>
</dbReference>
<dbReference type="EMBL" id="AE014296">
    <property type="protein sequence ID" value="AAF50274.1"/>
    <property type="molecule type" value="Genomic_DNA"/>
</dbReference>
<dbReference type="EMBL" id="AY051689">
    <property type="protein sequence ID" value="AAK93113.1"/>
    <property type="molecule type" value="mRNA"/>
</dbReference>
<dbReference type="RefSeq" id="NP_524001.2">
    <property type="nucleotide sequence ID" value="NM_079277.3"/>
</dbReference>
<dbReference type="SMR" id="Q9VSY6"/>
<dbReference type="BioGRID" id="64479">
    <property type="interactions" value="3"/>
</dbReference>
<dbReference type="FunCoup" id="Q9VSY6">
    <property type="interactions" value="538"/>
</dbReference>
<dbReference type="IntAct" id="Q9VSY6">
    <property type="interactions" value="1"/>
</dbReference>
<dbReference type="STRING" id="7227.FBpp0076185"/>
<dbReference type="GlyGen" id="Q9VSY6">
    <property type="glycosylation" value="1 site"/>
</dbReference>
<dbReference type="PaxDb" id="7227-FBpp0076185"/>
<dbReference type="DNASU" id="39085"/>
<dbReference type="EnsemblMetazoa" id="FBtr0076457">
    <property type="protein sequence ID" value="FBpp0076185"/>
    <property type="gene ID" value="FBgn0023129"/>
</dbReference>
<dbReference type="GeneID" id="39085"/>
<dbReference type="KEGG" id="dme:Dmel_CG3705"/>
<dbReference type="UCSC" id="CG3705-RA">
    <property type="organism name" value="d. melanogaster"/>
</dbReference>
<dbReference type="AGR" id="FB:FBgn0023129"/>
<dbReference type="CTD" id="39085"/>
<dbReference type="FlyBase" id="FBgn0023129">
    <property type="gene designation" value="aay"/>
</dbReference>
<dbReference type="VEuPathDB" id="VectorBase:FBgn0023129"/>
<dbReference type="eggNOG" id="KOG1615">
    <property type="taxonomic scope" value="Eukaryota"/>
</dbReference>
<dbReference type="GeneTree" id="ENSGT00390000003115"/>
<dbReference type="HOGENOM" id="CLU_036368_2_1_1"/>
<dbReference type="InParanoid" id="Q9VSY6"/>
<dbReference type="OMA" id="ANYFIGF"/>
<dbReference type="OrthoDB" id="27226at2759"/>
<dbReference type="PhylomeDB" id="Q9VSY6"/>
<dbReference type="Reactome" id="R-DME-977347">
    <property type="pathway name" value="Serine biosynthesis"/>
</dbReference>
<dbReference type="UniPathway" id="UPA00135">
    <property type="reaction ID" value="UER00198"/>
</dbReference>
<dbReference type="BioGRID-ORCS" id="39085">
    <property type="hits" value="0 hits in 3 CRISPR screens"/>
</dbReference>
<dbReference type="GenomeRNAi" id="39085"/>
<dbReference type="PRO" id="PR:Q9VSY6"/>
<dbReference type="Proteomes" id="UP000000803">
    <property type="component" value="Chromosome 3L"/>
</dbReference>
<dbReference type="Bgee" id="FBgn0023129">
    <property type="expression patterns" value="Expressed in fat body cell in dorsal vessel heart and 228 other cell types or tissues"/>
</dbReference>
<dbReference type="ExpressionAtlas" id="Q9VSY6">
    <property type="expression patterns" value="baseline and differential"/>
</dbReference>
<dbReference type="GO" id="GO:0005737">
    <property type="term" value="C:cytoplasm"/>
    <property type="evidence" value="ECO:0000318"/>
    <property type="project" value="GO_Central"/>
</dbReference>
<dbReference type="GO" id="GO:0036424">
    <property type="term" value="F:L-phosphoserine phosphatase activity"/>
    <property type="evidence" value="ECO:0000250"/>
    <property type="project" value="UniProtKB"/>
</dbReference>
<dbReference type="GO" id="GO:0000287">
    <property type="term" value="F:magnesium ion binding"/>
    <property type="evidence" value="ECO:0000250"/>
    <property type="project" value="UniProtKB"/>
</dbReference>
<dbReference type="GO" id="GO:0048149">
    <property type="term" value="P:behavioral response to ethanol"/>
    <property type="evidence" value="ECO:0000315"/>
    <property type="project" value="FlyBase"/>
</dbReference>
<dbReference type="GO" id="GO:0006564">
    <property type="term" value="P:L-serine biosynthetic process"/>
    <property type="evidence" value="ECO:0000318"/>
    <property type="project" value="GO_Central"/>
</dbReference>
<dbReference type="GO" id="GO:0006563">
    <property type="term" value="P:L-serine metabolic process"/>
    <property type="evidence" value="ECO:0000250"/>
    <property type="project" value="UniProtKB"/>
</dbReference>
<dbReference type="CDD" id="cd04309">
    <property type="entry name" value="HAD_PSP_eu"/>
    <property type="match status" value="1"/>
</dbReference>
<dbReference type="FunFam" id="1.10.150.210:FF:000002">
    <property type="entry name" value="Phosphoserine phosphatase"/>
    <property type="match status" value="1"/>
</dbReference>
<dbReference type="FunFam" id="3.40.50.1000:FF:000158">
    <property type="entry name" value="Phosphoserine phosphatase SerB"/>
    <property type="match status" value="1"/>
</dbReference>
<dbReference type="Gene3D" id="3.40.50.1000">
    <property type="entry name" value="HAD superfamily/HAD-like"/>
    <property type="match status" value="1"/>
</dbReference>
<dbReference type="Gene3D" id="1.10.150.210">
    <property type="entry name" value="Phosphoserine phosphatase, domain 2"/>
    <property type="match status" value="1"/>
</dbReference>
<dbReference type="InterPro" id="IPR050582">
    <property type="entry name" value="HAD-like_SerB"/>
</dbReference>
<dbReference type="InterPro" id="IPR036412">
    <property type="entry name" value="HAD-like_sf"/>
</dbReference>
<dbReference type="InterPro" id="IPR023214">
    <property type="entry name" value="HAD_sf"/>
</dbReference>
<dbReference type="InterPro" id="IPR004469">
    <property type="entry name" value="PSP"/>
</dbReference>
<dbReference type="NCBIfam" id="TIGR01488">
    <property type="entry name" value="HAD-SF-IB"/>
    <property type="match status" value="1"/>
</dbReference>
<dbReference type="NCBIfam" id="TIGR00338">
    <property type="entry name" value="serB"/>
    <property type="match status" value="1"/>
</dbReference>
<dbReference type="PANTHER" id="PTHR43344">
    <property type="entry name" value="PHOSPHOSERINE PHOSPHATASE"/>
    <property type="match status" value="1"/>
</dbReference>
<dbReference type="PANTHER" id="PTHR43344:SF2">
    <property type="entry name" value="PHOSPHOSERINE PHOSPHATASE"/>
    <property type="match status" value="1"/>
</dbReference>
<dbReference type="Pfam" id="PF00702">
    <property type="entry name" value="Hydrolase"/>
    <property type="match status" value="1"/>
</dbReference>
<dbReference type="SUPFAM" id="SSF56784">
    <property type="entry name" value="HAD-like"/>
    <property type="match status" value="1"/>
</dbReference>
<organism>
    <name type="scientific">Drosophila melanogaster</name>
    <name type="common">Fruit fly</name>
    <dbReference type="NCBI Taxonomy" id="7227"/>
    <lineage>
        <taxon>Eukaryota</taxon>
        <taxon>Metazoa</taxon>
        <taxon>Ecdysozoa</taxon>
        <taxon>Arthropoda</taxon>
        <taxon>Hexapoda</taxon>
        <taxon>Insecta</taxon>
        <taxon>Pterygota</taxon>
        <taxon>Neoptera</taxon>
        <taxon>Endopterygota</taxon>
        <taxon>Diptera</taxon>
        <taxon>Brachycera</taxon>
        <taxon>Muscomorpha</taxon>
        <taxon>Ephydroidea</taxon>
        <taxon>Drosophilidae</taxon>
        <taxon>Drosophila</taxon>
        <taxon>Sophophora</taxon>
    </lineage>
</organism>
<proteinExistence type="evidence at transcript level"/>
<comment type="function">
    <text evidence="1">Catalyzes the last step in the biosynthesis of serine from carbohydrates. The reaction mechanism proceeds via the formation of a phosphoryl-enzyme intermediates (By similarity).</text>
</comment>
<comment type="catalytic activity">
    <reaction>
        <text>O-phospho-L-serine + H2O = L-serine + phosphate</text>
        <dbReference type="Rhea" id="RHEA:21208"/>
        <dbReference type="ChEBI" id="CHEBI:15377"/>
        <dbReference type="ChEBI" id="CHEBI:33384"/>
        <dbReference type="ChEBI" id="CHEBI:43474"/>
        <dbReference type="ChEBI" id="CHEBI:57524"/>
        <dbReference type="EC" id="3.1.3.3"/>
    </reaction>
</comment>
<comment type="catalytic activity">
    <reaction>
        <text>O-phospho-D-serine + H2O = D-serine + phosphate</text>
        <dbReference type="Rhea" id="RHEA:24873"/>
        <dbReference type="ChEBI" id="CHEBI:15377"/>
        <dbReference type="ChEBI" id="CHEBI:35247"/>
        <dbReference type="ChEBI" id="CHEBI:43474"/>
        <dbReference type="ChEBI" id="CHEBI:58680"/>
        <dbReference type="EC" id="3.1.3.3"/>
    </reaction>
</comment>
<comment type="cofactor">
    <cofactor evidence="1">
        <name>Mg(2+)</name>
        <dbReference type="ChEBI" id="CHEBI:18420"/>
    </cofactor>
    <text evidence="1">Binds 1 Mg(2+) ion per subunit.</text>
</comment>
<comment type="pathway">
    <text>Amino-acid biosynthesis; L-serine biosynthesis; L-serine from 3-phospho-D-glycerate: step 3/3.</text>
</comment>
<comment type="developmental stage">
    <text evidence="2">Expressed in a complex banded pattern early in embryogenesis. During maturation of the embryo, expression becomes restricted to cells around and of the gut.</text>
</comment>
<comment type="similarity">
    <text evidence="3">Belongs to the HAD-like hydrolase superfamily. SerB family.</text>
</comment>
<protein>
    <recommendedName>
        <fullName>Phosphoserine phosphatase</fullName>
        <shortName>PSP</shortName>
        <shortName>PSPase</shortName>
        <ecNumber>3.1.3.3</ecNumber>
    </recommendedName>
    <alternativeName>
        <fullName>O-phosphoserine phosphohydrolase</fullName>
    </alternativeName>
</protein>
<feature type="chain" id="PRO_0000156883" description="Phosphoserine phosphatase">
    <location>
        <begin position="1"/>
        <end position="270"/>
    </location>
</feature>
<feature type="active site" description="Nucleophile" evidence="1">
    <location>
        <position position="67"/>
    </location>
</feature>
<feature type="active site" description="Proton donor" evidence="1">
    <location>
        <position position="69"/>
    </location>
</feature>
<feature type="binding site" evidence="1">
    <location>
        <position position="67"/>
    </location>
    <ligand>
        <name>Mg(2+)</name>
        <dbReference type="ChEBI" id="CHEBI:18420"/>
    </ligand>
</feature>
<feature type="binding site" evidence="1">
    <location>
        <position position="69"/>
    </location>
    <ligand>
        <name>Mg(2+)</name>
        <dbReference type="ChEBI" id="CHEBI:18420"/>
    </ligand>
</feature>
<feature type="binding site" evidence="1">
    <location>
        <position position="76"/>
    </location>
    <ligand>
        <name>substrate</name>
    </ligand>
</feature>
<feature type="binding site" evidence="1">
    <location>
        <position position="112"/>
    </location>
    <ligand>
        <name>substrate</name>
    </ligand>
</feature>
<feature type="binding site" evidence="1">
    <location>
        <begin position="156"/>
        <end position="157"/>
    </location>
    <ligand>
        <name>substrate</name>
    </ligand>
</feature>
<feature type="binding site" evidence="1">
    <location>
        <position position="205"/>
    </location>
    <ligand>
        <name>substrate</name>
    </ligand>
</feature>
<feature type="binding site" evidence="1">
    <location>
        <position position="227"/>
    </location>
    <ligand>
        <name>Mg(2+)</name>
        <dbReference type="ChEBI" id="CHEBI:18420"/>
    </ligand>
</feature>
<feature type="sequence conflict" description="In Ref. 1; AAF14696." evidence="3" ref="1">
    <original>T</original>
    <variation>A</variation>
    <location>
        <position position="22"/>
    </location>
</feature>
<feature type="sequence conflict" description="In Ref. 1; AAF14696." evidence="3" ref="1">
    <original>S</original>
    <variation>N</variation>
    <location>
        <position position="217"/>
    </location>
</feature>
<name>SERB_DROME</name>
<keyword id="KW-0028">Amino-acid biosynthesis</keyword>
<keyword id="KW-0378">Hydrolase</keyword>
<keyword id="KW-0460">Magnesium</keyword>
<keyword id="KW-0479">Metal-binding</keyword>
<keyword id="KW-0597">Phosphoprotein</keyword>
<keyword id="KW-1185">Reference proteome</keyword>
<keyword id="KW-0718">Serine biosynthesis</keyword>
<gene>
    <name type="primary">aay</name>
    <name type="synonym">astray</name>
    <name type="ORF">CG3705</name>
</gene>
<sequence length="270" mass="29218">MSGSVLSLARPAAATNGHNLLTKQLNCNGNGTTGGAAKTTVASAITPPKQPQLAAKVIQQSQIVCFDVDSTVICEEGIDELAEYCGKGSEVARVTKEAMGGAMTFQDALKIRLNIIRPTQQQVRDFIQERPSTLSKNVKRFVSHLKAEGKQVYLISGGFDCLIAPVANELGIPLKNVYANKMLFDYLGEYDSFDINQPTSRSGGKAEAIALIRKENSDDSLITMIGDGATDLEAVPPANYFIGFGGNVVRPEVYRRAQYYVTDFEQLMGQ</sequence>
<evidence type="ECO:0000250" key="1"/>
<evidence type="ECO:0000269" key="2">
    <source>
    </source>
</evidence>
<evidence type="ECO:0000305" key="3"/>